<proteinExistence type="evidence at protein level"/>
<organism>
    <name type="scientific">Schizosaccharomyces pombe (strain 972 / ATCC 24843)</name>
    <name type="common">Fission yeast</name>
    <dbReference type="NCBI Taxonomy" id="284812"/>
    <lineage>
        <taxon>Eukaryota</taxon>
        <taxon>Fungi</taxon>
        <taxon>Dikarya</taxon>
        <taxon>Ascomycota</taxon>
        <taxon>Taphrinomycotina</taxon>
        <taxon>Schizosaccharomycetes</taxon>
        <taxon>Schizosaccharomycetales</taxon>
        <taxon>Schizosaccharomycetaceae</taxon>
        <taxon>Schizosaccharomyces</taxon>
    </lineage>
</organism>
<keyword id="KW-0472">Membrane</keyword>
<keyword id="KW-0509">mRNA transport</keyword>
<keyword id="KW-0906">Nuclear pore complex</keyword>
<keyword id="KW-0539">Nucleus</keyword>
<keyword id="KW-0597">Phosphoprotein</keyword>
<keyword id="KW-0653">Protein transport</keyword>
<keyword id="KW-1185">Reference proteome</keyword>
<keyword id="KW-0811">Translocation</keyword>
<keyword id="KW-0813">Transport</keyword>
<sequence length="736" mass="80253">MSSGPIRTLHKGKAARNRTPYDRIAASKDGNHSNGPQTPSKSIFQRAKEWLTPSSWKKAISIFSSPVVNKHEDSFDSKTDEEYLQNVSTTTEDVSMLINTPVTEKYEQEHRDTSAQATPSIVEQSPNQMLANFFSKKGKTPLNEIEKEGIISILNKSASPSSSVISPAASLNRFQTPRAAAISKRESGVSSEPRARTSSLTPGNTPNSAKQWSAFRSTFSPLREQDQLSTISPNSLLPAQRLSYYGPTLSTPYNRRLRHKRHSTTPISLSNSIAPSLSFQPKKARYESANVSFNDTSFTNVPTSSPLHQSTTANHPEKTPSRAAASLLSILDSKEKNTPSITAKAGSPQSAPSKASYISPYARPGITTSRRRHDQIRPSSEKSEPEKKEPSAFETLEKSSNVQTYKPSLMPEFLEKASTHGSFAKQKEGEQTSLSEKTALSEPENKTPVFSFKAPSATTDKPSPPVSSIFSFNAPSAASTKPSPAVSSTFSFNAPTTTPSATSFSIINKEKPARSPNETIDVDLEEEGSGISAEVEVANEGEDLQKNATEVKASTSEKPVFRFEAVTDEKNSEVSSSNQASSSTMISQPNTGFSFGSFNKPAGQEEKPQQRSLFSASFTTQKPELPAAKIEPEVQMTNVAIDQRSFEQAEKSPISVSESTSLVEVEKPSAEGTNEHKQDATMTLEKTDKQGSLEEEPFPKFSFTVLPKENGENLSTMESTQELPKFSFSVLKEEKN</sequence>
<protein>
    <recommendedName>
        <fullName>Nucleoporin nup60</fullName>
    </recommendedName>
    <alternativeName>
        <fullName>Nuclear pore protein nup60</fullName>
    </alternativeName>
</protein>
<name>NUP60_SCHPO</name>
<feature type="chain" id="PRO_0000350997" description="Nucleoporin nup60">
    <location>
        <begin position="1"/>
        <end position="736"/>
    </location>
</feature>
<feature type="region of interest" description="Disordered" evidence="3">
    <location>
        <begin position="1"/>
        <end position="46"/>
    </location>
</feature>
<feature type="region of interest" description="Disordered" evidence="3">
    <location>
        <begin position="178"/>
        <end position="210"/>
    </location>
</feature>
<feature type="region of interest" description="Disordered" evidence="3">
    <location>
        <begin position="295"/>
        <end position="321"/>
    </location>
</feature>
<feature type="region of interest" description="Disordered" evidence="3">
    <location>
        <begin position="338"/>
        <end position="519"/>
    </location>
</feature>
<feature type="region of interest" description="Disordered" evidence="3">
    <location>
        <begin position="565"/>
        <end position="614"/>
    </location>
</feature>
<feature type="region of interest" description="Disordered" evidence="3">
    <location>
        <begin position="647"/>
        <end position="701"/>
    </location>
</feature>
<feature type="compositionally biased region" description="Basic and acidic residues" evidence="3">
    <location>
        <begin position="19"/>
        <end position="31"/>
    </location>
</feature>
<feature type="compositionally biased region" description="Polar residues" evidence="3">
    <location>
        <begin position="32"/>
        <end position="43"/>
    </location>
</feature>
<feature type="compositionally biased region" description="Polar residues" evidence="3">
    <location>
        <begin position="196"/>
        <end position="210"/>
    </location>
</feature>
<feature type="compositionally biased region" description="Polar residues" evidence="3">
    <location>
        <begin position="295"/>
        <end position="314"/>
    </location>
</feature>
<feature type="compositionally biased region" description="Basic and acidic residues" evidence="3">
    <location>
        <begin position="375"/>
        <end position="397"/>
    </location>
</feature>
<feature type="compositionally biased region" description="Polar residues" evidence="3">
    <location>
        <begin position="456"/>
        <end position="473"/>
    </location>
</feature>
<feature type="compositionally biased region" description="Low complexity" evidence="3">
    <location>
        <begin position="474"/>
        <end position="505"/>
    </location>
</feature>
<feature type="compositionally biased region" description="Low complexity" evidence="3">
    <location>
        <begin position="573"/>
        <end position="587"/>
    </location>
</feature>
<feature type="compositionally biased region" description="Polar residues" evidence="3">
    <location>
        <begin position="588"/>
        <end position="597"/>
    </location>
</feature>
<feature type="compositionally biased region" description="Basic and acidic residues" evidence="3">
    <location>
        <begin position="664"/>
        <end position="692"/>
    </location>
</feature>
<feature type="modified residue" description="Phosphoserine" evidence="4">
    <location>
        <position position="157"/>
    </location>
</feature>
<feature type="modified residue" description="Phosphoserine" evidence="4">
    <location>
        <position position="159"/>
    </location>
</feature>
<feature type="modified residue" description="Phosphoserine" evidence="4">
    <location>
        <position position="161"/>
    </location>
</feature>
<feature type="modified residue" description="Phosphoserine" evidence="4">
    <location>
        <position position="162"/>
    </location>
</feature>
<comment type="function">
    <text evidence="1">Functions as a component of the nuclear pore complex (NPC). NPC components, collectively referred to as nucleoporins (NUPs), can play the role of both NPC structural components and of docking or interaction partners for transiently associated nuclear transport factors. Active directional transport is assured by both, a Phe-Gly (FG) repeat affinity gradient for these transport factors across the NPC and a transport cofactor concentration gradient across the nuclear envelope (By similarity).</text>
</comment>
<comment type="subunit">
    <text evidence="2">Component of the nuclear pore complex (NPC). NPC constitutes the exclusive means of nucleocytoplasmic transport. NPCs allow the passive diffusion of ions and small molecules and the active, nuclear transport receptor-mediated bidirectional transport of macromolecules such as proteins, RNAs, ribonucleoparticles (RNPs), and ribosomal subunits across the nuclear envelope.</text>
</comment>
<comment type="subcellular location">
    <subcellularLocation>
        <location>Nucleus</location>
        <location>Nuclear pore complex</location>
    </subcellularLocation>
    <subcellularLocation>
        <location evidence="1">Nucleus membrane</location>
        <topology evidence="1">Peripheral membrane protein</topology>
        <orientation evidence="1">Nucleoplasmic side</orientation>
    </subcellularLocation>
</comment>
<gene>
    <name type="primary">nup60</name>
    <name type="ORF">SPCC285.13c</name>
</gene>
<accession>O74500</accession>
<evidence type="ECO:0000250" key="1"/>
<evidence type="ECO:0000250" key="2">
    <source>
        <dbReference type="UniProtKB" id="P39705"/>
    </source>
</evidence>
<evidence type="ECO:0000256" key="3">
    <source>
        <dbReference type="SAM" id="MobiDB-lite"/>
    </source>
</evidence>
<evidence type="ECO:0000269" key="4">
    <source>
    </source>
</evidence>
<dbReference type="EMBL" id="CU329672">
    <property type="protein sequence ID" value="CAA20852.1"/>
    <property type="molecule type" value="Genomic_DNA"/>
</dbReference>
<dbReference type="PIR" id="T41259">
    <property type="entry name" value="T41259"/>
</dbReference>
<dbReference type="RefSeq" id="NP_588341.1">
    <property type="nucleotide sequence ID" value="NM_001023332.2"/>
</dbReference>
<dbReference type="BioGRID" id="275382">
    <property type="interactions" value="108"/>
</dbReference>
<dbReference type="FunCoup" id="O74500">
    <property type="interactions" value="30"/>
</dbReference>
<dbReference type="STRING" id="284812.O74500"/>
<dbReference type="iPTMnet" id="O74500"/>
<dbReference type="PaxDb" id="4896-SPCC285.13c.1"/>
<dbReference type="EnsemblFungi" id="SPCC285.13c.1">
    <property type="protein sequence ID" value="SPCC285.13c.1:pep"/>
    <property type="gene ID" value="SPCC285.13c"/>
</dbReference>
<dbReference type="GeneID" id="2538801"/>
<dbReference type="KEGG" id="spo:2538801"/>
<dbReference type="PomBase" id="SPCC285.13c">
    <property type="gene designation" value="nup60"/>
</dbReference>
<dbReference type="VEuPathDB" id="FungiDB:SPCC285.13c"/>
<dbReference type="eggNOG" id="ENOG502T5TJ">
    <property type="taxonomic scope" value="Eukaryota"/>
</dbReference>
<dbReference type="HOGENOM" id="CLU_381375_0_0_1"/>
<dbReference type="InParanoid" id="O74500"/>
<dbReference type="OMA" id="CDAKKPG"/>
<dbReference type="PRO" id="PR:O74500"/>
<dbReference type="Proteomes" id="UP000002485">
    <property type="component" value="Chromosome III"/>
</dbReference>
<dbReference type="GO" id="GO:0140512">
    <property type="term" value="C:mitotic nuclear bridge midzone"/>
    <property type="evidence" value="ECO:0000314"/>
    <property type="project" value="PomBase"/>
</dbReference>
<dbReference type="GO" id="GO:0140599">
    <property type="term" value="C:mitotic nuclear bridge midzone membrane domain"/>
    <property type="evidence" value="ECO:0000314"/>
    <property type="project" value="PomBase"/>
</dbReference>
<dbReference type="GO" id="GO:0031965">
    <property type="term" value="C:nuclear membrane"/>
    <property type="evidence" value="ECO:0007669"/>
    <property type="project" value="UniProtKB-SubCell"/>
</dbReference>
<dbReference type="GO" id="GO:0005643">
    <property type="term" value="C:nuclear pore"/>
    <property type="evidence" value="ECO:0000314"/>
    <property type="project" value="PomBase"/>
</dbReference>
<dbReference type="GO" id="GO:0044615">
    <property type="term" value="C:nuclear pore nuclear basket"/>
    <property type="evidence" value="ECO:0007669"/>
    <property type="project" value="InterPro"/>
</dbReference>
<dbReference type="GO" id="GO:0017056">
    <property type="term" value="F:structural constituent of nuclear pore"/>
    <property type="evidence" value="ECO:0000318"/>
    <property type="project" value="GO_Central"/>
</dbReference>
<dbReference type="GO" id="GO:0008298">
    <property type="term" value="P:intracellular mRNA localization"/>
    <property type="evidence" value="ECO:0000318"/>
    <property type="project" value="GO_Central"/>
</dbReference>
<dbReference type="GO" id="GO:0031990">
    <property type="term" value="P:mRNA export from nucleus in response to heat stress"/>
    <property type="evidence" value="ECO:0000318"/>
    <property type="project" value="GO_Central"/>
</dbReference>
<dbReference type="GO" id="GO:0006607">
    <property type="term" value="P:NLS-bearing protein import into nucleus"/>
    <property type="evidence" value="ECO:0000318"/>
    <property type="project" value="GO_Central"/>
</dbReference>
<dbReference type="GO" id="GO:0016973">
    <property type="term" value="P:poly(A)+ mRNA export from nucleus"/>
    <property type="evidence" value="ECO:0000318"/>
    <property type="project" value="GO_Central"/>
</dbReference>
<dbReference type="GO" id="GO:0120292">
    <property type="term" value="P:positive regulation of mitotic recombination-dependent replication fork processing"/>
    <property type="evidence" value="ECO:0000269"/>
    <property type="project" value="PomBase"/>
</dbReference>
<dbReference type="GO" id="GO:0034398">
    <property type="term" value="P:telomere tethering at nuclear periphery"/>
    <property type="evidence" value="ECO:0000318"/>
    <property type="project" value="GO_Central"/>
</dbReference>
<dbReference type="InterPro" id="IPR034432">
    <property type="entry name" value="Nup60"/>
</dbReference>
<dbReference type="PANTHER" id="PTHR28284">
    <property type="entry name" value="NUCLEOPORIN NUP60"/>
    <property type="match status" value="1"/>
</dbReference>
<dbReference type="PANTHER" id="PTHR28284:SF1">
    <property type="entry name" value="NUCLEOPORIN NUP60"/>
    <property type="match status" value="1"/>
</dbReference>
<reference key="1">
    <citation type="journal article" date="2002" name="Nature">
        <title>The genome sequence of Schizosaccharomyces pombe.</title>
        <authorList>
            <person name="Wood V."/>
            <person name="Gwilliam R."/>
            <person name="Rajandream M.A."/>
            <person name="Lyne M.H."/>
            <person name="Lyne R."/>
            <person name="Stewart A."/>
            <person name="Sgouros J.G."/>
            <person name="Peat N."/>
            <person name="Hayles J."/>
            <person name="Baker S.G."/>
            <person name="Basham D."/>
            <person name="Bowman S."/>
            <person name="Brooks K."/>
            <person name="Brown D."/>
            <person name="Brown S."/>
            <person name="Chillingworth T."/>
            <person name="Churcher C.M."/>
            <person name="Collins M."/>
            <person name="Connor R."/>
            <person name="Cronin A."/>
            <person name="Davis P."/>
            <person name="Feltwell T."/>
            <person name="Fraser A."/>
            <person name="Gentles S."/>
            <person name="Goble A."/>
            <person name="Hamlin N."/>
            <person name="Harris D.E."/>
            <person name="Hidalgo J."/>
            <person name="Hodgson G."/>
            <person name="Holroyd S."/>
            <person name="Hornsby T."/>
            <person name="Howarth S."/>
            <person name="Huckle E.J."/>
            <person name="Hunt S."/>
            <person name="Jagels K."/>
            <person name="James K.D."/>
            <person name="Jones L."/>
            <person name="Jones M."/>
            <person name="Leather S."/>
            <person name="McDonald S."/>
            <person name="McLean J."/>
            <person name="Mooney P."/>
            <person name="Moule S."/>
            <person name="Mungall K.L."/>
            <person name="Murphy L.D."/>
            <person name="Niblett D."/>
            <person name="Odell C."/>
            <person name="Oliver K."/>
            <person name="O'Neil S."/>
            <person name="Pearson D."/>
            <person name="Quail M.A."/>
            <person name="Rabbinowitsch E."/>
            <person name="Rutherford K.M."/>
            <person name="Rutter S."/>
            <person name="Saunders D."/>
            <person name="Seeger K."/>
            <person name="Sharp S."/>
            <person name="Skelton J."/>
            <person name="Simmonds M.N."/>
            <person name="Squares R."/>
            <person name="Squares S."/>
            <person name="Stevens K."/>
            <person name="Taylor K."/>
            <person name="Taylor R.G."/>
            <person name="Tivey A."/>
            <person name="Walsh S.V."/>
            <person name="Warren T."/>
            <person name="Whitehead S."/>
            <person name="Woodward J.R."/>
            <person name="Volckaert G."/>
            <person name="Aert R."/>
            <person name="Robben J."/>
            <person name="Grymonprez B."/>
            <person name="Weltjens I."/>
            <person name="Vanstreels E."/>
            <person name="Rieger M."/>
            <person name="Schaefer M."/>
            <person name="Mueller-Auer S."/>
            <person name="Gabel C."/>
            <person name="Fuchs M."/>
            <person name="Duesterhoeft A."/>
            <person name="Fritzc C."/>
            <person name="Holzer E."/>
            <person name="Moestl D."/>
            <person name="Hilbert H."/>
            <person name="Borzym K."/>
            <person name="Langer I."/>
            <person name="Beck A."/>
            <person name="Lehrach H."/>
            <person name="Reinhardt R."/>
            <person name="Pohl T.M."/>
            <person name="Eger P."/>
            <person name="Zimmermann W."/>
            <person name="Wedler H."/>
            <person name="Wambutt R."/>
            <person name="Purnelle B."/>
            <person name="Goffeau A."/>
            <person name="Cadieu E."/>
            <person name="Dreano S."/>
            <person name="Gloux S."/>
            <person name="Lelaure V."/>
            <person name="Mottier S."/>
            <person name="Galibert F."/>
            <person name="Aves S.J."/>
            <person name="Xiang Z."/>
            <person name="Hunt C."/>
            <person name="Moore K."/>
            <person name="Hurst S.M."/>
            <person name="Lucas M."/>
            <person name="Rochet M."/>
            <person name="Gaillardin C."/>
            <person name="Tallada V.A."/>
            <person name="Garzon A."/>
            <person name="Thode G."/>
            <person name="Daga R.R."/>
            <person name="Cruzado L."/>
            <person name="Jimenez J."/>
            <person name="Sanchez M."/>
            <person name="del Rey F."/>
            <person name="Benito J."/>
            <person name="Dominguez A."/>
            <person name="Revuelta J.L."/>
            <person name="Moreno S."/>
            <person name="Armstrong J."/>
            <person name="Forsburg S.L."/>
            <person name="Cerutti L."/>
            <person name="Lowe T."/>
            <person name="McCombie W.R."/>
            <person name="Paulsen I."/>
            <person name="Potashkin J."/>
            <person name="Shpakovski G.V."/>
            <person name="Ussery D."/>
            <person name="Barrell B.G."/>
            <person name="Nurse P."/>
        </authorList>
    </citation>
    <scope>NUCLEOTIDE SEQUENCE [LARGE SCALE GENOMIC DNA]</scope>
    <source>
        <strain>972 / ATCC 24843</strain>
    </source>
</reference>
<reference key="2">
    <citation type="journal article" date="2008" name="J. Proteome Res.">
        <title>Phosphoproteome analysis of fission yeast.</title>
        <authorList>
            <person name="Wilson-Grady J.T."/>
            <person name="Villen J."/>
            <person name="Gygi S.P."/>
        </authorList>
    </citation>
    <scope>PHOSPHORYLATION [LARGE SCALE ANALYSIS] AT SER-157; SER-159; SER-161 AND SER-162</scope>
    <scope>IDENTIFICATION BY MASS SPECTROMETRY</scope>
</reference>